<keyword id="KW-1003">Cell membrane</keyword>
<keyword id="KW-0325">Glycoprotein</keyword>
<keyword id="KW-0472">Membrane</keyword>
<keyword id="KW-0812">Transmembrane</keyword>
<keyword id="KW-1133">Transmembrane helix</keyword>
<comment type="function">
    <text evidence="4">G protein-coupled receptor that plays a role in conidiation and regulation of the biosynthesis of secondary metabolites such as dihydroxynaphthalene (DHN)-melanin, via interaction with the G-protein complex alpha subunit gpaA.</text>
</comment>
<comment type="subunit">
    <text evidence="4">Interacts with gpaA.</text>
</comment>
<comment type="subcellular location">
    <subcellularLocation>
        <location evidence="6">Cell membrane</location>
        <topology evidence="1">Multi-pass membrane protein</topology>
    </subcellularLocation>
</comment>
<comment type="disruption phenotype">
    <text evidence="4">Leads to a strong increase of dihydroxynaphthalene (DHN)-melanin production.</text>
</comment>
<comment type="similarity">
    <text evidence="6">Belongs to the G-protein coupled receptor GPR1/git3 family.</text>
</comment>
<organism>
    <name type="scientific">Aspergillus fumigatus (strain CBS 144.89 / FGSC A1163 / CEA10)</name>
    <name type="common">Neosartorya fumigata</name>
    <dbReference type="NCBI Taxonomy" id="451804"/>
    <lineage>
        <taxon>Eukaryota</taxon>
        <taxon>Fungi</taxon>
        <taxon>Dikarya</taxon>
        <taxon>Ascomycota</taxon>
        <taxon>Pezizomycotina</taxon>
        <taxon>Eurotiomycetes</taxon>
        <taxon>Eurotiomycetidae</taxon>
        <taxon>Eurotiales</taxon>
        <taxon>Aspergillaceae</taxon>
        <taxon>Aspergillus</taxon>
        <taxon>Aspergillus subgen. Fumigati</taxon>
    </lineage>
</organism>
<sequence length="497" mass="54927">MTNRTSLNGRCPVPFLQEDLFPPTGGFIGGRYCQPVGDISCCLPCPIVSWTYGDGLFGKASSASWISVAILPLCIFLLVSYAVLPVKFTHRHYLSVCFTLGICFMEASKIAFIIPLGVKPDQCYNQITPNDMHSSLSCAFTGSLLLLGGWMVVVWSFLRTVAFHLQVCWEVILGPKFMWGALIFGWVVPAVGLTVMLILTGVSFRFGTVCHINIDGALQDYWIPIISFAVAALILQLATMAYCIHVYVKSLFDTDSTTNSSGLPSYSASVRTVSARQAYRRIRRVLQLQWRGVTLVLIIIANVIFFSVTFIELDSSLKPTAENMEKALPWVACLAATNGDREKCDPEAAKFRPSEGLLLAVLVLLSLVGFWNFILFARPSIFHGWVDFFQNKFGTGDGRLEFVSADARTRLGDTRSYEMLNSTGLPSYKSPSPMVRSPSPARMGGTKSPENGHFGRDARYVRPSMSFSSPRPPSAPQGRGWDPKTTFAPAVYREYDD</sequence>
<dbReference type="EMBL" id="DS499601">
    <property type="protein sequence ID" value="EDP48372.1"/>
    <property type="molecule type" value="Genomic_DNA"/>
</dbReference>
<dbReference type="GlyCosmos" id="B0YCP1">
    <property type="glycosylation" value="3 sites, No reported glycans"/>
</dbReference>
<dbReference type="EnsemblFungi" id="EDP48372">
    <property type="protein sequence ID" value="EDP48372"/>
    <property type="gene ID" value="AFUB_090880"/>
</dbReference>
<dbReference type="VEuPathDB" id="FungiDB:AFUB_090880"/>
<dbReference type="HOGENOM" id="CLU_026939_1_0_1"/>
<dbReference type="OrthoDB" id="101505at5052"/>
<dbReference type="PhylomeDB" id="B0YCP1"/>
<dbReference type="Proteomes" id="UP000001699">
    <property type="component" value="Unassembled WGS sequence"/>
</dbReference>
<dbReference type="GO" id="GO:0005886">
    <property type="term" value="C:plasma membrane"/>
    <property type="evidence" value="ECO:0007669"/>
    <property type="project" value="UniProtKB-SubCell"/>
</dbReference>
<dbReference type="Gene3D" id="1.20.1070.10">
    <property type="entry name" value="Rhodopsin 7-helix transmembrane proteins"/>
    <property type="match status" value="1"/>
</dbReference>
<dbReference type="InterPro" id="IPR053247">
    <property type="entry name" value="GPCR_GPR1/git3-like"/>
</dbReference>
<dbReference type="PANTHER" id="PTHR42058:SF1">
    <property type="entry name" value="G-PROTEIN COUPLED RECEPTORS FAMILY 2 PROFILE 2 DOMAIN-CONTAINING PROTEIN"/>
    <property type="match status" value="1"/>
</dbReference>
<dbReference type="PANTHER" id="PTHR42058">
    <property type="entry name" value="G_PROTEIN_RECEP_F2_4 DOMAIN-CONTAINING PROTEIN"/>
    <property type="match status" value="1"/>
</dbReference>
<feature type="chain" id="PRO_0000454889" description="G protein-coupled receptor gprM">
    <location>
        <begin position="1"/>
        <end position="497"/>
    </location>
</feature>
<feature type="transmembrane region" description="Helical" evidence="1">
    <location>
        <begin position="66"/>
        <end position="86"/>
    </location>
</feature>
<feature type="transmembrane region" description="Helical" evidence="1">
    <location>
        <begin position="98"/>
        <end position="118"/>
    </location>
</feature>
<feature type="transmembrane region" description="Helical" evidence="1">
    <location>
        <begin position="138"/>
        <end position="158"/>
    </location>
</feature>
<feature type="transmembrane region" description="Helical" evidence="1">
    <location>
        <begin position="179"/>
        <end position="199"/>
    </location>
</feature>
<feature type="transmembrane region" description="Helical" evidence="1">
    <location>
        <begin position="221"/>
        <end position="241"/>
    </location>
</feature>
<feature type="transmembrane region" description="Helical" evidence="1">
    <location>
        <begin position="293"/>
        <end position="313"/>
    </location>
</feature>
<feature type="transmembrane region" description="Helical" evidence="1">
    <location>
        <begin position="357"/>
        <end position="377"/>
    </location>
</feature>
<feature type="region of interest" description="Disordered" evidence="3">
    <location>
        <begin position="428"/>
        <end position="497"/>
    </location>
</feature>
<feature type="glycosylation site" description="N-linked (GlcNAc...) asparagine" evidence="2">
    <location>
        <position position="3"/>
    </location>
</feature>
<feature type="glycosylation site" description="N-linked (GlcNAc...) asparagine" evidence="2">
    <location>
        <position position="259"/>
    </location>
</feature>
<feature type="glycosylation site" description="N-linked (GlcNAc...) asparagine" evidence="2">
    <location>
        <position position="421"/>
    </location>
</feature>
<gene>
    <name evidence="5" type="primary">gprM</name>
    <name type="ORF">AFUB_090880</name>
</gene>
<reference key="1">
    <citation type="journal article" date="2008" name="PLoS Genet.">
        <title>Genomic islands in the pathogenic filamentous fungus Aspergillus fumigatus.</title>
        <authorList>
            <person name="Fedorova N.D."/>
            <person name="Khaldi N."/>
            <person name="Joardar V.S."/>
            <person name="Maiti R."/>
            <person name="Amedeo P."/>
            <person name="Anderson M.J."/>
            <person name="Crabtree J."/>
            <person name="Silva J.C."/>
            <person name="Badger J.H."/>
            <person name="Albarraq A."/>
            <person name="Angiuoli S."/>
            <person name="Bussey H."/>
            <person name="Bowyer P."/>
            <person name="Cotty P.J."/>
            <person name="Dyer P.S."/>
            <person name="Egan A."/>
            <person name="Galens K."/>
            <person name="Fraser-Liggett C.M."/>
            <person name="Haas B.J."/>
            <person name="Inman J.M."/>
            <person name="Kent R."/>
            <person name="Lemieux S."/>
            <person name="Malavazi I."/>
            <person name="Orvis J."/>
            <person name="Roemer T."/>
            <person name="Ronning C.M."/>
            <person name="Sundaram J.P."/>
            <person name="Sutton G."/>
            <person name="Turner G."/>
            <person name="Venter J.C."/>
            <person name="White O.R."/>
            <person name="Whitty B.R."/>
            <person name="Youngman P."/>
            <person name="Wolfe K.H."/>
            <person name="Goldman G.H."/>
            <person name="Wortman J.R."/>
            <person name="Jiang B."/>
            <person name="Denning D.W."/>
            <person name="Nierman W.C."/>
        </authorList>
    </citation>
    <scope>NUCLEOTIDE SEQUENCE [LARGE SCALE GENOMIC DNA]</scope>
    <source>
        <strain>CBS 144.89 / FGSC A1163 / CEA10</strain>
    </source>
</reference>
<reference key="2">
    <citation type="journal article" date="2019" name="MBio">
        <title>Mitogen-activated protein kinase cross-talk interaction modulates the production of melanins in Aspergillus fumigatus.</title>
        <authorList>
            <person name="Manfiolli A.O."/>
            <person name="Siqueira F.S."/>
            <person name="Dos Reis T.F."/>
            <person name="Van Dijck P."/>
            <person name="Schrevens S."/>
            <person name="Hoefgen S."/>
            <person name="Foege M."/>
            <person name="Strassburger M."/>
            <person name="de Assis L.J."/>
            <person name="Heinekamp T."/>
            <person name="Rocha M.C."/>
            <person name="Janevska S."/>
            <person name="Brakhage A.A."/>
            <person name="Malavazi I."/>
            <person name="Goldman G.H."/>
            <person name="Valiante V."/>
        </authorList>
    </citation>
    <scope>FUNCTION</scope>
    <scope>DISRUPTION PHENOTYPE</scope>
    <scope>INTERACTION WITH GPAA</scope>
</reference>
<proteinExistence type="evidence at protein level"/>
<accession>B0YCP1</accession>
<evidence type="ECO:0000255" key="1"/>
<evidence type="ECO:0000255" key="2">
    <source>
        <dbReference type="PROSITE-ProRule" id="PRU00498"/>
    </source>
</evidence>
<evidence type="ECO:0000256" key="3">
    <source>
        <dbReference type="SAM" id="MobiDB-lite"/>
    </source>
</evidence>
<evidence type="ECO:0000269" key="4">
    <source>
    </source>
</evidence>
<evidence type="ECO:0000303" key="5">
    <source>
    </source>
</evidence>
<evidence type="ECO:0000305" key="6"/>
<name>GPRM_ASPFC</name>
<protein>
    <recommendedName>
        <fullName evidence="5">G protein-coupled receptor gprM</fullName>
    </recommendedName>
</protein>